<organism>
    <name type="scientific">Streptococcus sanguinis (strain SK36)</name>
    <dbReference type="NCBI Taxonomy" id="388919"/>
    <lineage>
        <taxon>Bacteria</taxon>
        <taxon>Bacillati</taxon>
        <taxon>Bacillota</taxon>
        <taxon>Bacilli</taxon>
        <taxon>Lactobacillales</taxon>
        <taxon>Streptococcaceae</taxon>
        <taxon>Streptococcus</taxon>
    </lineage>
</organism>
<comment type="function">
    <text evidence="1">One of the primary rRNA binding proteins, it binds directly to 16S rRNA where it nucleates assembly of the head domain of the 30S subunit. Is located at the subunit interface close to the decoding center, probably blocks exit of the E-site tRNA.</text>
</comment>
<comment type="subunit">
    <text evidence="1">Part of the 30S ribosomal subunit. Contacts proteins S9 and S11.</text>
</comment>
<comment type="similarity">
    <text evidence="1">Belongs to the universal ribosomal protein uS7 family.</text>
</comment>
<reference key="1">
    <citation type="journal article" date="2007" name="J. Bacteriol.">
        <title>Genome of the opportunistic pathogen Streptococcus sanguinis.</title>
        <authorList>
            <person name="Xu P."/>
            <person name="Alves J.M."/>
            <person name="Kitten T."/>
            <person name="Brown A."/>
            <person name="Chen Z."/>
            <person name="Ozaki L.S."/>
            <person name="Manque P."/>
            <person name="Ge X."/>
            <person name="Serrano M.G."/>
            <person name="Puiu D."/>
            <person name="Hendricks S."/>
            <person name="Wang Y."/>
            <person name="Chaplin M.D."/>
            <person name="Akan D."/>
            <person name="Paik S."/>
            <person name="Peterson D.L."/>
            <person name="Macrina F.L."/>
            <person name="Buck G.A."/>
        </authorList>
    </citation>
    <scope>NUCLEOTIDE SEQUENCE [LARGE SCALE GENOMIC DNA]</scope>
    <source>
        <strain>SK36</strain>
    </source>
</reference>
<keyword id="KW-1185">Reference proteome</keyword>
<keyword id="KW-0687">Ribonucleoprotein</keyword>
<keyword id="KW-0689">Ribosomal protein</keyword>
<keyword id="KW-0694">RNA-binding</keyword>
<keyword id="KW-0699">rRNA-binding</keyword>
<keyword id="KW-0820">tRNA-binding</keyword>
<sequence length="156" mass="17730">MSRKNQAPKREVLPDPLYNSKLVTRLINRVMLDGKRGTAASIVYGAFDQIKEATGNDALEVFETAMENIMPVLEVRARRVGGSNYQVPVEVRPERRTTLGLRWLVTIARQRGEHTMVDRLAKEILDASNNTGAAVKKREDTHRMAEANRAFAHFRW</sequence>
<dbReference type="EMBL" id="CP000387">
    <property type="protein sequence ID" value="ABN45478.1"/>
    <property type="molecule type" value="Genomic_DNA"/>
</dbReference>
<dbReference type="RefSeq" id="WP_002893865.1">
    <property type="nucleotide sequence ID" value="NZ_CAXTYR010000002.1"/>
</dbReference>
<dbReference type="RefSeq" id="YP_001036028.1">
    <property type="nucleotide sequence ID" value="NC_009009.1"/>
</dbReference>
<dbReference type="SMR" id="A3CQM3"/>
<dbReference type="STRING" id="388919.SSA_2110"/>
<dbReference type="GeneID" id="48424708"/>
<dbReference type="KEGG" id="ssa:SSA_2110"/>
<dbReference type="PATRIC" id="fig|388919.9.peg.2000"/>
<dbReference type="eggNOG" id="COG0049">
    <property type="taxonomic scope" value="Bacteria"/>
</dbReference>
<dbReference type="HOGENOM" id="CLU_072226_1_1_9"/>
<dbReference type="OrthoDB" id="9807653at2"/>
<dbReference type="Proteomes" id="UP000002148">
    <property type="component" value="Chromosome"/>
</dbReference>
<dbReference type="GO" id="GO:0015935">
    <property type="term" value="C:small ribosomal subunit"/>
    <property type="evidence" value="ECO:0007669"/>
    <property type="project" value="InterPro"/>
</dbReference>
<dbReference type="GO" id="GO:0019843">
    <property type="term" value="F:rRNA binding"/>
    <property type="evidence" value="ECO:0007669"/>
    <property type="project" value="UniProtKB-UniRule"/>
</dbReference>
<dbReference type="GO" id="GO:0003735">
    <property type="term" value="F:structural constituent of ribosome"/>
    <property type="evidence" value="ECO:0007669"/>
    <property type="project" value="InterPro"/>
</dbReference>
<dbReference type="GO" id="GO:0000049">
    <property type="term" value="F:tRNA binding"/>
    <property type="evidence" value="ECO:0007669"/>
    <property type="project" value="UniProtKB-UniRule"/>
</dbReference>
<dbReference type="GO" id="GO:0006412">
    <property type="term" value="P:translation"/>
    <property type="evidence" value="ECO:0007669"/>
    <property type="project" value="UniProtKB-UniRule"/>
</dbReference>
<dbReference type="CDD" id="cd14869">
    <property type="entry name" value="uS7_Bacteria"/>
    <property type="match status" value="1"/>
</dbReference>
<dbReference type="FunFam" id="1.10.455.10:FF:000001">
    <property type="entry name" value="30S ribosomal protein S7"/>
    <property type="match status" value="1"/>
</dbReference>
<dbReference type="Gene3D" id="1.10.455.10">
    <property type="entry name" value="Ribosomal protein S7 domain"/>
    <property type="match status" value="1"/>
</dbReference>
<dbReference type="HAMAP" id="MF_00480_B">
    <property type="entry name" value="Ribosomal_uS7_B"/>
    <property type="match status" value="1"/>
</dbReference>
<dbReference type="InterPro" id="IPR000235">
    <property type="entry name" value="Ribosomal_uS7"/>
</dbReference>
<dbReference type="InterPro" id="IPR005717">
    <property type="entry name" value="Ribosomal_uS7_bac/org-type"/>
</dbReference>
<dbReference type="InterPro" id="IPR020606">
    <property type="entry name" value="Ribosomal_uS7_CS"/>
</dbReference>
<dbReference type="InterPro" id="IPR023798">
    <property type="entry name" value="Ribosomal_uS7_dom"/>
</dbReference>
<dbReference type="InterPro" id="IPR036823">
    <property type="entry name" value="Ribosomal_uS7_dom_sf"/>
</dbReference>
<dbReference type="NCBIfam" id="TIGR01029">
    <property type="entry name" value="rpsG_bact"/>
    <property type="match status" value="1"/>
</dbReference>
<dbReference type="PANTHER" id="PTHR11205">
    <property type="entry name" value="RIBOSOMAL PROTEIN S7"/>
    <property type="match status" value="1"/>
</dbReference>
<dbReference type="Pfam" id="PF00177">
    <property type="entry name" value="Ribosomal_S7"/>
    <property type="match status" value="1"/>
</dbReference>
<dbReference type="PIRSF" id="PIRSF002122">
    <property type="entry name" value="RPS7p_RPS7a_RPS5e_RPS7o"/>
    <property type="match status" value="1"/>
</dbReference>
<dbReference type="SUPFAM" id="SSF47973">
    <property type="entry name" value="Ribosomal protein S7"/>
    <property type="match status" value="1"/>
</dbReference>
<dbReference type="PROSITE" id="PS00052">
    <property type="entry name" value="RIBOSOMAL_S7"/>
    <property type="match status" value="1"/>
</dbReference>
<protein>
    <recommendedName>
        <fullName evidence="1">Small ribosomal subunit protein uS7</fullName>
    </recommendedName>
    <alternativeName>
        <fullName evidence="2">30S ribosomal protein S7</fullName>
    </alternativeName>
</protein>
<gene>
    <name evidence="1" type="primary">rpsG</name>
    <name type="ordered locus">SSA_2110</name>
</gene>
<name>RS7_STRSV</name>
<accession>A3CQM3</accession>
<feature type="chain" id="PRO_1000014305" description="Small ribosomal subunit protein uS7">
    <location>
        <begin position="1"/>
        <end position="156"/>
    </location>
</feature>
<proteinExistence type="inferred from homology"/>
<evidence type="ECO:0000255" key="1">
    <source>
        <dbReference type="HAMAP-Rule" id="MF_00480"/>
    </source>
</evidence>
<evidence type="ECO:0000305" key="2"/>